<proteinExistence type="inferred from homology"/>
<sequence length="179" mass="20229">MAKLHDKYQETVVAELAKKFGYTSVMQVPRIEKITLNMGVGEAVADKKIMDHAVRDMTAIAGQKPVVTVARKSVAGFKIREGYPIGCKVTLRGERMWEFLERLVDIAIPRIRDFRGLSAKAFDGRGNYAMGVREQIIFPEIDYDKIDKIRGMDIVITTTAKNDEEGRALLDAFNFPFKK</sequence>
<evidence type="ECO:0000255" key="1">
    <source>
        <dbReference type="HAMAP-Rule" id="MF_01333"/>
    </source>
</evidence>
<evidence type="ECO:0000305" key="2"/>
<accession>B8EBJ3</accession>
<name>RL5_SHEB2</name>
<comment type="function">
    <text evidence="1">This is one of the proteins that bind and probably mediate the attachment of the 5S RNA into the large ribosomal subunit, where it forms part of the central protuberance. In the 70S ribosome it contacts protein S13 of the 30S subunit (bridge B1b), connecting the 2 subunits; this bridge is implicated in subunit movement. Contacts the P site tRNA; the 5S rRNA and some of its associated proteins might help stabilize positioning of ribosome-bound tRNAs.</text>
</comment>
<comment type="subunit">
    <text evidence="1">Part of the 50S ribosomal subunit; part of the 5S rRNA/L5/L18/L25 subcomplex. Contacts the 5S rRNA and the P site tRNA. Forms a bridge to the 30S subunit in the 70S ribosome.</text>
</comment>
<comment type="similarity">
    <text evidence="1">Belongs to the universal ribosomal protein uL5 family.</text>
</comment>
<gene>
    <name evidence="1" type="primary">rplE</name>
    <name type="ordered locus">Sbal223_4044</name>
</gene>
<reference key="1">
    <citation type="submission" date="2008-12" db="EMBL/GenBank/DDBJ databases">
        <title>Complete sequence of chromosome of Shewanella baltica OS223.</title>
        <authorList>
            <consortium name="US DOE Joint Genome Institute"/>
            <person name="Lucas S."/>
            <person name="Copeland A."/>
            <person name="Lapidus A."/>
            <person name="Glavina del Rio T."/>
            <person name="Dalin E."/>
            <person name="Tice H."/>
            <person name="Bruce D."/>
            <person name="Goodwin L."/>
            <person name="Pitluck S."/>
            <person name="Chertkov O."/>
            <person name="Meincke L."/>
            <person name="Brettin T."/>
            <person name="Detter J.C."/>
            <person name="Han C."/>
            <person name="Kuske C.R."/>
            <person name="Larimer F."/>
            <person name="Land M."/>
            <person name="Hauser L."/>
            <person name="Kyrpides N."/>
            <person name="Ovchinnikova G."/>
            <person name="Brettar I."/>
            <person name="Rodrigues J."/>
            <person name="Konstantinidis K."/>
            <person name="Tiedje J."/>
        </authorList>
    </citation>
    <scope>NUCLEOTIDE SEQUENCE [LARGE SCALE GENOMIC DNA]</scope>
    <source>
        <strain>OS223</strain>
    </source>
</reference>
<organism>
    <name type="scientific">Shewanella baltica (strain OS223)</name>
    <dbReference type="NCBI Taxonomy" id="407976"/>
    <lineage>
        <taxon>Bacteria</taxon>
        <taxon>Pseudomonadati</taxon>
        <taxon>Pseudomonadota</taxon>
        <taxon>Gammaproteobacteria</taxon>
        <taxon>Alteromonadales</taxon>
        <taxon>Shewanellaceae</taxon>
        <taxon>Shewanella</taxon>
    </lineage>
</organism>
<keyword id="KW-0687">Ribonucleoprotein</keyword>
<keyword id="KW-0689">Ribosomal protein</keyword>
<keyword id="KW-0694">RNA-binding</keyword>
<keyword id="KW-0699">rRNA-binding</keyword>
<keyword id="KW-0820">tRNA-binding</keyword>
<dbReference type="EMBL" id="CP001252">
    <property type="protein sequence ID" value="ACK48517.1"/>
    <property type="molecule type" value="Genomic_DNA"/>
</dbReference>
<dbReference type="RefSeq" id="WP_006083588.1">
    <property type="nucleotide sequence ID" value="NC_011663.1"/>
</dbReference>
<dbReference type="SMR" id="B8EBJ3"/>
<dbReference type="GeneID" id="11770569"/>
<dbReference type="KEGG" id="sbp:Sbal223_4044"/>
<dbReference type="HOGENOM" id="CLU_061015_2_1_6"/>
<dbReference type="Proteomes" id="UP000002507">
    <property type="component" value="Chromosome"/>
</dbReference>
<dbReference type="GO" id="GO:1990904">
    <property type="term" value="C:ribonucleoprotein complex"/>
    <property type="evidence" value="ECO:0007669"/>
    <property type="project" value="UniProtKB-KW"/>
</dbReference>
<dbReference type="GO" id="GO:0005840">
    <property type="term" value="C:ribosome"/>
    <property type="evidence" value="ECO:0007669"/>
    <property type="project" value="UniProtKB-KW"/>
</dbReference>
<dbReference type="GO" id="GO:0019843">
    <property type="term" value="F:rRNA binding"/>
    <property type="evidence" value="ECO:0007669"/>
    <property type="project" value="UniProtKB-UniRule"/>
</dbReference>
<dbReference type="GO" id="GO:0003735">
    <property type="term" value="F:structural constituent of ribosome"/>
    <property type="evidence" value="ECO:0007669"/>
    <property type="project" value="InterPro"/>
</dbReference>
<dbReference type="GO" id="GO:0000049">
    <property type="term" value="F:tRNA binding"/>
    <property type="evidence" value="ECO:0007669"/>
    <property type="project" value="UniProtKB-UniRule"/>
</dbReference>
<dbReference type="GO" id="GO:0006412">
    <property type="term" value="P:translation"/>
    <property type="evidence" value="ECO:0007669"/>
    <property type="project" value="UniProtKB-UniRule"/>
</dbReference>
<dbReference type="FunFam" id="3.30.1440.10:FF:000001">
    <property type="entry name" value="50S ribosomal protein L5"/>
    <property type="match status" value="1"/>
</dbReference>
<dbReference type="Gene3D" id="3.30.1440.10">
    <property type="match status" value="1"/>
</dbReference>
<dbReference type="HAMAP" id="MF_01333_B">
    <property type="entry name" value="Ribosomal_uL5_B"/>
    <property type="match status" value="1"/>
</dbReference>
<dbReference type="InterPro" id="IPR002132">
    <property type="entry name" value="Ribosomal_uL5"/>
</dbReference>
<dbReference type="InterPro" id="IPR020930">
    <property type="entry name" value="Ribosomal_uL5_bac-type"/>
</dbReference>
<dbReference type="InterPro" id="IPR031309">
    <property type="entry name" value="Ribosomal_uL5_C"/>
</dbReference>
<dbReference type="InterPro" id="IPR020929">
    <property type="entry name" value="Ribosomal_uL5_CS"/>
</dbReference>
<dbReference type="InterPro" id="IPR022803">
    <property type="entry name" value="Ribosomal_uL5_dom_sf"/>
</dbReference>
<dbReference type="InterPro" id="IPR031310">
    <property type="entry name" value="Ribosomal_uL5_N"/>
</dbReference>
<dbReference type="NCBIfam" id="NF000585">
    <property type="entry name" value="PRK00010.1"/>
    <property type="match status" value="1"/>
</dbReference>
<dbReference type="PANTHER" id="PTHR11994">
    <property type="entry name" value="60S RIBOSOMAL PROTEIN L11-RELATED"/>
    <property type="match status" value="1"/>
</dbReference>
<dbReference type="Pfam" id="PF00281">
    <property type="entry name" value="Ribosomal_L5"/>
    <property type="match status" value="1"/>
</dbReference>
<dbReference type="Pfam" id="PF00673">
    <property type="entry name" value="Ribosomal_L5_C"/>
    <property type="match status" value="1"/>
</dbReference>
<dbReference type="PIRSF" id="PIRSF002161">
    <property type="entry name" value="Ribosomal_L5"/>
    <property type="match status" value="1"/>
</dbReference>
<dbReference type="SUPFAM" id="SSF55282">
    <property type="entry name" value="RL5-like"/>
    <property type="match status" value="1"/>
</dbReference>
<dbReference type="PROSITE" id="PS00358">
    <property type="entry name" value="RIBOSOMAL_L5"/>
    <property type="match status" value="1"/>
</dbReference>
<protein>
    <recommendedName>
        <fullName evidence="1">Large ribosomal subunit protein uL5</fullName>
    </recommendedName>
    <alternativeName>
        <fullName evidence="2">50S ribosomal protein L5</fullName>
    </alternativeName>
</protein>
<feature type="chain" id="PRO_1000166147" description="Large ribosomal subunit protein uL5">
    <location>
        <begin position="1"/>
        <end position="179"/>
    </location>
</feature>